<dbReference type="EMBL" id="CP000283">
    <property type="protein sequence ID" value="ABE40397.1"/>
    <property type="molecule type" value="Genomic_DNA"/>
</dbReference>
<dbReference type="SMR" id="Q134U2"/>
<dbReference type="STRING" id="316057.RPD_3171"/>
<dbReference type="KEGG" id="rpd:RPD_3171"/>
<dbReference type="eggNOG" id="COG0199">
    <property type="taxonomic scope" value="Bacteria"/>
</dbReference>
<dbReference type="HOGENOM" id="CLU_139869_0_1_5"/>
<dbReference type="BioCyc" id="RPAL316057:RPD_RS15920-MONOMER"/>
<dbReference type="Proteomes" id="UP000001818">
    <property type="component" value="Chromosome"/>
</dbReference>
<dbReference type="GO" id="GO:0005737">
    <property type="term" value="C:cytoplasm"/>
    <property type="evidence" value="ECO:0007669"/>
    <property type="project" value="UniProtKB-ARBA"/>
</dbReference>
<dbReference type="GO" id="GO:0015935">
    <property type="term" value="C:small ribosomal subunit"/>
    <property type="evidence" value="ECO:0007669"/>
    <property type="project" value="TreeGrafter"/>
</dbReference>
<dbReference type="GO" id="GO:0019843">
    <property type="term" value="F:rRNA binding"/>
    <property type="evidence" value="ECO:0007669"/>
    <property type="project" value="UniProtKB-UniRule"/>
</dbReference>
<dbReference type="GO" id="GO:0003735">
    <property type="term" value="F:structural constituent of ribosome"/>
    <property type="evidence" value="ECO:0007669"/>
    <property type="project" value="InterPro"/>
</dbReference>
<dbReference type="GO" id="GO:0006412">
    <property type="term" value="P:translation"/>
    <property type="evidence" value="ECO:0007669"/>
    <property type="project" value="UniProtKB-UniRule"/>
</dbReference>
<dbReference type="FunFam" id="1.10.287.1480:FF:000001">
    <property type="entry name" value="30S ribosomal protein S14"/>
    <property type="match status" value="1"/>
</dbReference>
<dbReference type="Gene3D" id="1.10.287.1480">
    <property type="match status" value="1"/>
</dbReference>
<dbReference type="HAMAP" id="MF_00537">
    <property type="entry name" value="Ribosomal_uS14_1"/>
    <property type="match status" value="1"/>
</dbReference>
<dbReference type="InterPro" id="IPR001209">
    <property type="entry name" value="Ribosomal_uS14"/>
</dbReference>
<dbReference type="InterPro" id="IPR023036">
    <property type="entry name" value="Ribosomal_uS14_bac/plastid"/>
</dbReference>
<dbReference type="NCBIfam" id="NF006477">
    <property type="entry name" value="PRK08881.1"/>
    <property type="match status" value="1"/>
</dbReference>
<dbReference type="PANTHER" id="PTHR19836">
    <property type="entry name" value="30S RIBOSOMAL PROTEIN S14"/>
    <property type="match status" value="1"/>
</dbReference>
<dbReference type="PANTHER" id="PTHR19836:SF19">
    <property type="entry name" value="SMALL RIBOSOMAL SUBUNIT PROTEIN US14M"/>
    <property type="match status" value="1"/>
</dbReference>
<dbReference type="Pfam" id="PF00253">
    <property type="entry name" value="Ribosomal_S14"/>
    <property type="match status" value="1"/>
</dbReference>
<dbReference type="SUPFAM" id="SSF57716">
    <property type="entry name" value="Glucocorticoid receptor-like (DNA-binding domain)"/>
    <property type="match status" value="1"/>
</dbReference>
<protein>
    <recommendedName>
        <fullName evidence="1">Small ribosomal subunit protein uS14</fullName>
    </recommendedName>
    <alternativeName>
        <fullName evidence="3">30S ribosomal protein S14</fullName>
    </alternativeName>
</protein>
<sequence length="101" mass="11481">MAKKSSIEKNNRRRKMTKNAAPKRARLKAIIADKDLPMEERFAATLKLAEMPRNSSATRIRNRCEITGRSRSVYRLNKLSRIAIRDLGSKGLVPGLVKSSW</sequence>
<accession>Q134U2</accession>
<organism>
    <name type="scientific">Rhodopseudomonas palustris (strain BisB5)</name>
    <dbReference type="NCBI Taxonomy" id="316057"/>
    <lineage>
        <taxon>Bacteria</taxon>
        <taxon>Pseudomonadati</taxon>
        <taxon>Pseudomonadota</taxon>
        <taxon>Alphaproteobacteria</taxon>
        <taxon>Hyphomicrobiales</taxon>
        <taxon>Nitrobacteraceae</taxon>
        <taxon>Rhodopseudomonas</taxon>
    </lineage>
</organism>
<feature type="chain" id="PRO_1000128541" description="Small ribosomal subunit protein uS14">
    <location>
        <begin position="1"/>
        <end position="101"/>
    </location>
</feature>
<feature type="region of interest" description="Disordered" evidence="2">
    <location>
        <begin position="1"/>
        <end position="23"/>
    </location>
</feature>
<feature type="compositionally biased region" description="Basic and acidic residues" evidence="2">
    <location>
        <begin position="1"/>
        <end position="10"/>
    </location>
</feature>
<feature type="compositionally biased region" description="Basic residues" evidence="2">
    <location>
        <begin position="11"/>
        <end position="23"/>
    </location>
</feature>
<gene>
    <name evidence="1" type="primary">rpsN</name>
    <name type="ordered locus">RPD_3171</name>
</gene>
<name>RS14_RHOPS</name>
<comment type="function">
    <text evidence="1">Binds 16S rRNA, required for the assembly of 30S particles and may also be responsible for determining the conformation of the 16S rRNA at the A site.</text>
</comment>
<comment type="subunit">
    <text evidence="1">Part of the 30S ribosomal subunit. Contacts proteins S3 and S10.</text>
</comment>
<comment type="similarity">
    <text evidence="1">Belongs to the universal ribosomal protein uS14 family.</text>
</comment>
<keyword id="KW-0687">Ribonucleoprotein</keyword>
<keyword id="KW-0689">Ribosomal protein</keyword>
<keyword id="KW-0694">RNA-binding</keyword>
<keyword id="KW-0699">rRNA-binding</keyword>
<proteinExistence type="inferred from homology"/>
<reference key="1">
    <citation type="submission" date="2006-03" db="EMBL/GenBank/DDBJ databases">
        <title>Complete sequence of Rhodopseudomonas palustris BisB5.</title>
        <authorList>
            <consortium name="US DOE Joint Genome Institute"/>
            <person name="Copeland A."/>
            <person name="Lucas S."/>
            <person name="Lapidus A."/>
            <person name="Barry K."/>
            <person name="Detter J.C."/>
            <person name="Glavina del Rio T."/>
            <person name="Hammon N."/>
            <person name="Israni S."/>
            <person name="Dalin E."/>
            <person name="Tice H."/>
            <person name="Pitluck S."/>
            <person name="Chain P."/>
            <person name="Malfatti S."/>
            <person name="Shin M."/>
            <person name="Vergez L."/>
            <person name="Schmutz J."/>
            <person name="Larimer F."/>
            <person name="Land M."/>
            <person name="Hauser L."/>
            <person name="Pelletier D.A."/>
            <person name="Kyrpides N."/>
            <person name="Lykidis A."/>
            <person name="Oda Y."/>
            <person name="Harwood C.S."/>
            <person name="Richardson P."/>
        </authorList>
    </citation>
    <scope>NUCLEOTIDE SEQUENCE [LARGE SCALE GENOMIC DNA]</scope>
    <source>
        <strain>BisB5</strain>
    </source>
</reference>
<evidence type="ECO:0000255" key="1">
    <source>
        <dbReference type="HAMAP-Rule" id="MF_00537"/>
    </source>
</evidence>
<evidence type="ECO:0000256" key="2">
    <source>
        <dbReference type="SAM" id="MobiDB-lite"/>
    </source>
</evidence>
<evidence type="ECO:0000305" key="3"/>